<reference key="1">
    <citation type="journal article" date="2009" name="Infect. Immun.">
        <title>Comparative genomics reveal extensive transposon-mediated genomic plasticity and diversity among potential effector proteins within the genus Coxiella.</title>
        <authorList>
            <person name="Beare P.A."/>
            <person name="Unsworth N."/>
            <person name="Andoh M."/>
            <person name="Voth D.E."/>
            <person name="Omsland A."/>
            <person name="Gilk S.D."/>
            <person name="Williams K.P."/>
            <person name="Sobral B.W."/>
            <person name="Kupko J.J. III"/>
            <person name="Porcella S.F."/>
            <person name="Samuel J.E."/>
            <person name="Heinzen R.A."/>
        </authorList>
    </citation>
    <scope>NUCLEOTIDE SEQUENCE [LARGE SCALE GENOMIC DNA]</scope>
    <source>
        <strain>CbuG_Q212</strain>
    </source>
</reference>
<feature type="chain" id="PRO_1000187047" description="3-demethoxyubiquinol 3-hydroxylase">
    <location>
        <begin position="1"/>
        <end position="215"/>
    </location>
</feature>
<feature type="binding site" evidence="1">
    <location>
        <position position="64"/>
    </location>
    <ligand>
        <name>Fe cation</name>
        <dbReference type="ChEBI" id="CHEBI:24875"/>
        <label>1</label>
    </ligand>
</feature>
<feature type="binding site" evidence="1">
    <location>
        <position position="94"/>
    </location>
    <ligand>
        <name>Fe cation</name>
        <dbReference type="ChEBI" id="CHEBI:24875"/>
        <label>1</label>
    </ligand>
</feature>
<feature type="binding site" evidence="1">
    <location>
        <position position="94"/>
    </location>
    <ligand>
        <name>Fe cation</name>
        <dbReference type="ChEBI" id="CHEBI:24875"/>
        <label>2</label>
    </ligand>
</feature>
<feature type="binding site" evidence="1">
    <location>
        <position position="97"/>
    </location>
    <ligand>
        <name>Fe cation</name>
        <dbReference type="ChEBI" id="CHEBI:24875"/>
        <label>1</label>
    </ligand>
</feature>
<feature type="binding site" evidence="1">
    <location>
        <position position="146"/>
    </location>
    <ligand>
        <name>Fe cation</name>
        <dbReference type="ChEBI" id="CHEBI:24875"/>
        <label>2</label>
    </ligand>
</feature>
<feature type="binding site" evidence="1">
    <location>
        <position position="178"/>
    </location>
    <ligand>
        <name>Fe cation</name>
        <dbReference type="ChEBI" id="CHEBI:24875"/>
        <label>1</label>
    </ligand>
</feature>
<feature type="binding site" evidence="1">
    <location>
        <position position="178"/>
    </location>
    <ligand>
        <name>Fe cation</name>
        <dbReference type="ChEBI" id="CHEBI:24875"/>
        <label>2</label>
    </ligand>
</feature>
<feature type="binding site" evidence="1">
    <location>
        <position position="181"/>
    </location>
    <ligand>
        <name>Fe cation</name>
        <dbReference type="ChEBI" id="CHEBI:24875"/>
        <label>2</label>
    </ligand>
</feature>
<dbReference type="EC" id="1.14.99.60" evidence="1"/>
<dbReference type="EMBL" id="CP001019">
    <property type="protein sequence ID" value="ACJ17686.1"/>
    <property type="molecule type" value="Genomic_DNA"/>
</dbReference>
<dbReference type="RefSeq" id="WP_012569672.1">
    <property type="nucleotide sequence ID" value="NC_011527.1"/>
</dbReference>
<dbReference type="SMR" id="B6J3G0"/>
<dbReference type="KEGG" id="cbg:CbuG_0245"/>
<dbReference type="HOGENOM" id="CLU_088601_0_0_6"/>
<dbReference type="UniPathway" id="UPA00232"/>
<dbReference type="GO" id="GO:0005886">
    <property type="term" value="C:plasma membrane"/>
    <property type="evidence" value="ECO:0007669"/>
    <property type="project" value="UniProtKB-SubCell"/>
</dbReference>
<dbReference type="GO" id="GO:0008682">
    <property type="term" value="F:3-demethoxyubiquinol 3-hydroxylase activity"/>
    <property type="evidence" value="ECO:0007669"/>
    <property type="project" value="UniProtKB-EC"/>
</dbReference>
<dbReference type="GO" id="GO:0046872">
    <property type="term" value="F:metal ion binding"/>
    <property type="evidence" value="ECO:0007669"/>
    <property type="project" value="UniProtKB-KW"/>
</dbReference>
<dbReference type="GO" id="GO:0006744">
    <property type="term" value="P:ubiquinone biosynthetic process"/>
    <property type="evidence" value="ECO:0007669"/>
    <property type="project" value="UniProtKB-UniRule"/>
</dbReference>
<dbReference type="CDD" id="cd01042">
    <property type="entry name" value="DMQH"/>
    <property type="match status" value="1"/>
</dbReference>
<dbReference type="Gene3D" id="1.20.1260.10">
    <property type="match status" value="1"/>
</dbReference>
<dbReference type="HAMAP" id="MF_01658">
    <property type="entry name" value="COQ7"/>
    <property type="match status" value="1"/>
</dbReference>
<dbReference type="InterPro" id="IPR047809">
    <property type="entry name" value="COQ7_proteobact"/>
</dbReference>
<dbReference type="InterPro" id="IPR012347">
    <property type="entry name" value="Ferritin-like"/>
</dbReference>
<dbReference type="InterPro" id="IPR009078">
    <property type="entry name" value="Ferritin-like_SF"/>
</dbReference>
<dbReference type="InterPro" id="IPR011566">
    <property type="entry name" value="Ubq_synth_Coq7"/>
</dbReference>
<dbReference type="NCBIfam" id="NF033656">
    <property type="entry name" value="DMQ_monoox_COQ7"/>
    <property type="match status" value="1"/>
</dbReference>
<dbReference type="PANTHER" id="PTHR11237:SF4">
    <property type="entry name" value="5-DEMETHOXYUBIQUINONE HYDROXYLASE, MITOCHONDRIAL"/>
    <property type="match status" value="1"/>
</dbReference>
<dbReference type="PANTHER" id="PTHR11237">
    <property type="entry name" value="COENZYME Q10 BIOSYNTHESIS PROTEIN 7"/>
    <property type="match status" value="1"/>
</dbReference>
<dbReference type="Pfam" id="PF03232">
    <property type="entry name" value="COQ7"/>
    <property type="match status" value="1"/>
</dbReference>
<dbReference type="SUPFAM" id="SSF47240">
    <property type="entry name" value="Ferritin-like"/>
    <property type="match status" value="1"/>
</dbReference>
<name>COQ7_COXB2</name>
<evidence type="ECO:0000255" key="1">
    <source>
        <dbReference type="HAMAP-Rule" id="MF_01658"/>
    </source>
</evidence>
<sequence length="215" mass="23944">MSNNSRHYSAIDEAILQGQAMLETLFGKPVAQRENPAKGLSQPALTSAEKKQSIGFMRVNHSGEVCAQALYHGQMATAKNPAVRALFTTAAKEETDHLAWCQERLEELGGHTSYLNAFWYTNSFLIGLLAGLSGDPLSLGFVEETEKQVEIHLADHLRKIPSNDLKSRKIVEYMQQDEIQHGLNARSSGAKELPYLVKKLMAFHAKVMTTLAYWI</sequence>
<proteinExistence type="inferred from homology"/>
<comment type="function">
    <text evidence="1">Catalyzes the hydroxylation of 2-nonaprenyl-3-methyl-6-methoxy-1,4-benzoquinol during ubiquinone biosynthesis.</text>
</comment>
<comment type="catalytic activity">
    <reaction evidence="1">
        <text>a 5-methoxy-2-methyl-3-(all-trans-polyprenyl)benzene-1,4-diol + AH2 + O2 = a 3-demethylubiquinol + A + H2O</text>
        <dbReference type="Rhea" id="RHEA:50908"/>
        <dbReference type="Rhea" id="RHEA-COMP:10859"/>
        <dbReference type="Rhea" id="RHEA-COMP:10914"/>
        <dbReference type="ChEBI" id="CHEBI:13193"/>
        <dbReference type="ChEBI" id="CHEBI:15377"/>
        <dbReference type="ChEBI" id="CHEBI:15379"/>
        <dbReference type="ChEBI" id="CHEBI:17499"/>
        <dbReference type="ChEBI" id="CHEBI:84167"/>
        <dbReference type="ChEBI" id="CHEBI:84422"/>
        <dbReference type="EC" id="1.14.99.60"/>
    </reaction>
</comment>
<comment type="cofactor">
    <cofactor evidence="1">
        <name>Fe cation</name>
        <dbReference type="ChEBI" id="CHEBI:24875"/>
    </cofactor>
    <text evidence="1">Binds 2 iron ions per subunit.</text>
</comment>
<comment type="pathway">
    <text evidence="1">Cofactor biosynthesis; ubiquinone biosynthesis.</text>
</comment>
<comment type="subcellular location">
    <subcellularLocation>
        <location evidence="1">Cell membrane</location>
        <topology evidence="1">Peripheral membrane protein</topology>
    </subcellularLocation>
</comment>
<comment type="similarity">
    <text evidence="1">Belongs to the COQ7 family.</text>
</comment>
<gene>
    <name evidence="1" type="primary">coq7</name>
    <name type="ordered locus">CbuG_0245</name>
</gene>
<organism>
    <name type="scientific">Coxiella burnetii (strain CbuG_Q212)</name>
    <name type="common">Coxiella burnetii (strain Q212)</name>
    <dbReference type="NCBI Taxonomy" id="434923"/>
    <lineage>
        <taxon>Bacteria</taxon>
        <taxon>Pseudomonadati</taxon>
        <taxon>Pseudomonadota</taxon>
        <taxon>Gammaproteobacteria</taxon>
        <taxon>Legionellales</taxon>
        <taxon>Coxiellaceae</taxon>
        <taxon>Coxiella</taxon>
    </lineage>
</organism>
<accession>B6J3G0</accession>
<keyword id="KW-1003">Cell membrane</keyword>
<keyword id="KW-0408">Iron</keyword>
<keyword id="KW-0472">Membrane</keyword>
<keyword id="KW-0479">Metal-binding</keyword>
<keyword id="KW-0503">Monooxygenase</keyword>
<keyword id="KW-0560">Oxidoreductase</keyword>
<keyword id="KW-0831">Ubiquinone biosynthesis</keyword>
<protein>
    <recommendedName>
        <fullName evidence="1">3-demethoxyubiquinol 3-hydroxylase</fullName>
        <shortName evidence="1">DMQ hydroxylase</shortName>
        <ecNumber evidence="1">1.14.99.60</ecNumber>
    </recommendedName>
    <alternativeName>
        <fullName evidence="1">2-nonaprenyl-3-methyl-6-methoxy-1,4-benzoquinol hydroxylase</fullName>
    </alternativeName>
</protein>